<keyword id="KW-0997">Cell inner membrane</keyword>
<keyword id="KW-1003">Cell membrane</keyword>
<keyword id="KW-0472">Membrane</keyword>
<keyword id="KW-1185">Reference proteome</keyword>
<keyword id="KW-0769">Symport</keyword>
<keyword id="KW-0812">Transmembrane</keyword>
<keyword id="KW-1133">Transmembrane helix</keyword>
<keyword id="KW-0813">Transport</keyword>
<sequence length="446" mass="46571">MQRFTRPLFGQVLIALALGIALGIWAPDFAQHLKPLGDGFLKLIKMLIAPIVFSVVVVGICGAGELKKVGRVGGKAVIYFEVVTTIALALGIALAYAFGPGHGMNVDPKTLDASAMSSYMATAKQVESSGVAEFLLKLIPDTFVSGFMKGDILQVLLVSILFGCALSLLGERTKPLVGLIDQLSHVLFRMMAVVIRLAPLGVLGAVAFTVGKYGAGSLKQLGFLVLLFYAAVAVFVVVVLGGILRLAGFSIFKLIRFLRAELLVVLGTASSDAVLPSVMNKLEKMGIKRSVVGLVIPTGYSFNLDAFSIYLTLAAVFIAQATNTPLALSDLLLILGVALITSKGAHGIPGSAIVILAATLSVIPAIPAIGLVLVLSVDWFIGIARALGNLLGNCVATVVIAAWEKDIDRARANAVLDGKLDIIEEGEAAARGHGIQVPSASTLPHA</sequence>
<feature type="chain" id="PRO_0000202103" description="C4-dicarboxylate transport protein 2">
    <location>
        <begin position="1"/>
        <end position="446"/>
    </location>
</feature>
<feature type="transmembrane region" description="Helical" evidence="2">
    <location>
        <begin position="7"/>
        <end position="26"/>
    </location>
</feature>
<feature type="transmembrane region" description="Helical" evidence="2">
    <location>
        <begin position="46"/>
        <end position="64"/>
    </location>
</feature>
<feature type="transmembrane region" description="Helical" evidence="2">
    <location>
        <begin position="77"/>
        <end position="99"/>
    </location>
</feature>
<feature type="transmembrane region" description="Helical" evidence="2">
    <location>
        <begin position="152"/>
        <end position="171"/>
    </location>
</feature>
<feature type="transmembrane region" description="Helical" evidence="2">
    <location>
        <begin position="192"/>
        <end position="211"/>
    </location>
</feature>
<feature type="transmembrane region" description="Helical" evidence="2">
    <location>
        <begin position="221"/>
        <end position="243"/>
    </location>
</feature>
<feature type="transmembrane region" description="Helical" evidence="2">
    <location>
        <begin position="291"/>
        <end position="313"/>
    </location>
</feature>
<feature type="transmembrane region" description="Helical" evidence="2">
    <location>
        <begin position="318"/>
        <end position="340"/>
    </location>
</feature>
<feature type="transmembrane region" description="Helical" evidence="2">
    <location>
        <begin position="353"/>
        <end position="375"/>
    </location>
</feature>
<feature type="transmembrane region" description="Helical" evidence="2">
    <location>
        <begin position="381"/>
        <end position="403"/>
    </location>
</feature>
<proteinExistence type="inferred from homology"/>
<name>DCTA2_RALN1</name>
<reference key="1">
    <citation type="journal article" date="2002" name="Nature">
        <title>Genome sequence of the plant pathogen Ralstonia solanacearum.</title>
        <authorList>
            <person name="Salanoubat M."/>
            <person name="Genin S."/>
            <person name="Artiguenave F."/>
            <person name="Gouzy J."/>
            <person name="Mangenot S."/>
            <person name="Arlat M."/>
            <person name="Billault A."/>
            <person name="Brottier P."/>
            <person name="Camus J.-C."/>
            <person name="Cattolico L."/>
            <person name="Chandler M."/>
            <person name="Choisne N."/>
            <person name="Claudel-Renard C."/>
            <person name="Cunnac S."/>
            <person name="Demange N."/>
            <person name="Gaspin C."/>
            <person name="Lavie M."/>
            <person name="Moisan A."/>
            <person name="Robert C."/>
            <person name="Saurin W."/>
            <person name="Schiex T."/>
            <person name="Siguier P."/>
            <person name="Thebault P."/>
            <person name="Whalen M."/>
            <person name="Wincker P."/>
            <person name="Levy M."/>
            <person name="Weissenbach J."/>
            <person name="Boucher C.A."/>
        </authorList>
    </citation>
    <scope>NUCLEOTIDE SEQUENCE [LARGE SCALE GENOMIC DNA]</scope>
    <source>
        <strain>ATCC BAA-1114 / GMI1000</strain>
    </source>
</reference>
<organism>
    <name type="scientific">Ralstonia nicotianae (strain ATCC BAA-1114 / GMI1000)</name>
    <name type="common">Ralstonia solanacearum</name>
    <dbReference type="NCBI Taxonomy" id="267608"/>
    <lineage>
        <taxon>Bacteria</taxon>
        <taxon>Pseudomonadati</taxon>
        <taxon>Pseudomonadota</taxon>
        <taxon>Betaproteobacteria</taxon>
        <taxon>Burkholderiales</taxon>
        <taxon>Burkholderiaceae</taxon>
        <taxon>Ralstonia</taxon>
        <taxon>Ralstonia solanacearum species complex</taxon>
    </lineage>
</organism>
<comment type="function">
    <text evidence="1">Responsible for the transport of dicarboxylates such as succinate, fumarate, and malate from the periplasm across the membrane.</text>
</comment>
<comment type="subcellular location">
    <subcellularLocation>
        <location evidence="1">Cell inner membrane</location>
        <topology evidence="1">Multi-pass membrane protein</topology>
    </subcellularLocation>
</comment>
<comment type="similarity">
    <text evidence="3">Belongs to the dicarboxylate/amino acid:cation symporter (DAACS) (TC 2.A.23) family.</text>
</comment>
<gene>
    <name type="primary">dctA2</name>
    <name type="ordered locus">RSc3275</name>
    <name type="ORF">RS02504</name>
</gene>
<evidence type="ECO:0000250" key="1"/>
<evidence type="ECO:0000255" key="2"/>
<evidence type="ECO:0000305" key="3"/>
<dbReference type="EMBL" id="AL646052">
    <property type="protein sequence ID" value="CAD17063.1"/>
    <property type="molecule type" value="Genomic_DNA"/>
</dbReference>
<dbReference type="RefSeq" id="WP_011003160.1">
    <property type="nucleotide sequence ID" value="NC_003295.1"/>
</dbReference>
<dbReference type="SMR" id="Q8XUB6"/>
<dbReference type="STRING" id="267608.RSc3275"/>
<dbReference type="EnsemblBacteria" id="CAD17063">
    <property type="protein sequence ID" value="CAD17063"/>
    <property type="gene ID" value="RSc3275"/>
</dbReference>
<dbReference type="KEGG" id="rso:RSc3275"/>
<dbReference type="PATRIC" id="fig|267608.8.peg.3324"/>
<dbReference type="eggNOG" id="COG1301">
    <property type="taxonomic scope" value="Bacteria"/>
</dbReference>
<dbReference type="HOGENOM" id="CLU_019375_7_0_4"/>
<dbReference type="Proteomes" id="UP000001436">
    <property type="component" value="Chromosome"/>
</dbReference>
<dbReference type="GO" id="GO:0005886">
    <property type="term" value="C:plasma membrane"/>
    <property type="evidence" value="ECO:0007669"/>
    <property type="project" value="UniProtKB-SubCell"/>
</dbReference>
<dbReference type="GO" id="GO:0015138">
    <property type="term" value="F:fumarate transmembrane transporter activity"/>
    <property type="evidence" value="ECO:0007669"/>
    <property type="project" value="TreeGrafter"/>
</dbReference>
<dbReference type="GO" id="GO:0015366">
    <property type="term" value="F:malate:proton symporter activity"/>
    <property type="evidence" value="ECO:0007669"/>
    <property type="project" value="TreeGrafter"/>
</dbReference>
<dbReference type="GO" id="GO:0015141">
    <property type="term" value="F:succinate transmembrane transporter activity"/>
    <property type="evidence" value="ECO:0007669"/>
    <property type="project" value="TreeGrafter"/>
</dbReference>
<dbReference type="GO" id="GO:0070778">
    <property type="term" value="P:L-aspartate transmembrane transport"/>
    <property type="evidence" value="ECO:0007669"/>
    <property type="project" value="TreeGrafter"/>
</dbReference>
<dbReference type="FunFam" id="1.10.3860.10:FF:000001">
    <property type="entry name" value="C4-dicarboxylate transport protein"/>
    <property type="match status" value="1"/>
</dbReference>
<dbReference type="Gene3D" id="1.10.3860.10">
    <property type="entry name" value="Sodium:dicarboxylate symporter"/>
    <property type="match status" value="1"/>
</dbReference>
<dbReference type="HAMAP" id="MF_01300">
    <property type="entry name" value="C4_dicarb_transport"/>
    <property type="match status" value="1"/>
</dbReference>
<dbReference type="InterPro" id="IPR023954">
    <property type="entry name" value="C4_dicarb_transport"/>
</dbReference>
<dbReference type="InterPro" id="IPR001991">
    <property type="entry name" value="Na-dicarboxylate_symporter"/>
</dbReference>
<dbReference type="InterPro" id="IPR018107">
    <property type="entry name" value="Na-dicarboxylate_symporter_CS"/>
</dbReference>
<dbReference type="InterPro" id="IPR036458">
    <property type="entry name" value="Na:dicarbo_symporter_sf"/>
</dbReference>
<dbReference type="NCBIfam" id="NF002461">
    <property type="entry name" value="PRK01663.1"/>
    <property type="match status" value="1"/>
</dbReference>
<dbReference type="NCBIfam" id="NF009587">
    <property type="entry name" value="PRK13027.1"/>
    <property type="match status" value="1"/>
</dbReference>
<dbReference type="PANTHER" id="PTHR42865:SF1">
    <property type="entry name" value="AEROBIC C4-DICARBOXYLATE TRANSPORT PROTEIN"/>
    <property type="match status" value="1"/>
</dbReference>
<dbReference type="PANTHER" id="PTHR42865">
    <property type="entry name" value="PROTON/GLUTAMATE-ASPARTATE SYMPORTER"/>
    <property type="match status" value="1"/>
</dbReference>
<dbReference type="Pfam" id="PF00375">
    <property type="entry name" value="SDF"/>
    <property type="match status" value="1"/>
</dbReference>
<dbReference type="PRINTS" id="PR00173">
    <property type="entry name" value="EDTRNSPORT"/>
</dbReference>
<dbReference type="SUPFAM" id="SSF118215">
    <property type="entry name" value="Proton glutamate symport protein"/>
    <property type="match status" value="1"/>
</dbReference>
<dbReference type="PROSITE" id="PS00713">
    <property type="entry name" value="NA_DICARBOXYL_SYMP_1"/>
    <property type="match status" value="1"/>
</dbReference>
<dbReference type="PROSITE" id="PS00714">
    <property type="entry name" value="NA_DICARBOXYL_SYMP_2"/>
    <property type="match status" value="1"/>
</dbReference>
<protein>
    <recommendedName>
        <fullName>C4-dicarboxylate transport protein 2</fullName>
    </recommendedName>
</protein>
<accession>Q8XUB6</accession>